<reference key="1">
    <citation type="journal article" date="2008" name="Genome Res.">
        <title>Comparative genome analysis of Salmonella enteritidis PT4 and Salmonella gallinarum 287/91 provides insights into evolutionary and host adaptation pathways.</title>
        <authorList>
            <person name="Thomson N.R."/>
            <person name="Clayton D.J."/>
            <person name="Windhorst D."/>
            <person name="Vernikos G."/>
            <person name="Davidson S."/>
            <person name="Churcher C."/>
            <person name="Quail M.A."/>
            <person name="Stevens M."/>
            <person name="Jones M.A."/>
            <person name="Watson M."/>
            <person name="Barron A."/>
            <person name="Layton A."/>
            <person name="Pickard D."/>
            <person name="Kingsley R.A."/>
            <person name="Bignell A."/>
            <person name="Clark L."/>
            <person name="Harris B."/>
            <person name="Ormond D."/>
            <person name="Abdellah Z."/>
            <person name="Brooks K."/>
            <person name="Cherevach I."/>
            <person name="Chillingworth T."/>
            <person name="Woodward J."/>
            <person name="Norberczak H."/>
            <person name="Lord A."/>
            <person name="Arrowsmith C."/>
            <person name="Jagels K."/>
            <person name="Moule S."/>
            <person name="Mungall K."/>
            <person name="Saunders M."/>
            <person name="Whitehead S."/>
            <person name="Chabalgoity J.A."/>
            <person name="Maskell D."/>
            <person name="Humphreys T."/>
            <person name="Roberts M."/>
            <person name="Barrow P.A."/>
            <person name="Dougan G."/>
            <person name="Parkhill J."/>
        </authorList>
    </citation>
    <scope>NUCLEOTIDE SEQUENCE [LARGE SCALE GENOMIC DNA]</scope>
    <source>
        <strain>P125109</strain>
    </source>
</reference>
<proteinExistence type="inferred from homology"/>
<protein>
    <recommendedName>
        <fullName evidence="1">K(+)/H(+) antiporter NhaP2</fullName>
    </recommendedName>
    <alternativeName>
        <fullName evidence="1">Potassium/proton antiporter NhaP2</fullName>
    </alternativeName>
</protein>
<evidence type="ECO:0000255" key="1">
    <source>
        <dbReference type="HAMAP-Rule" id="MF_01075"/>
    </source>
</evidence>
<dbReference type="EMBL" id="AM933172">
    <property type="protein sequence ID" value="CAR32816.1"/>
    <property type="molecule type" value="Genomic_DNA"/>
</dbReference>
<dbReference type="RefSeq" id="WP_000338376.1">
    <property type="nucleotide sequence ID" value="NC_011294.1"/>
</dbReference>
<dbReference type="SMR" id="B5R2W9"/>
<dbReference type="KEGG" id="set:SEN1236"/>
<dbReference type="HOGENOM" id="CLU_005912_9_2_6"/>
<dbReference type="Proteomes" id="UP000000613">
    <property type="component" value="Chromosome"/>
</dbReference>
<dbReference type="GO" id="GO:0005886">
    <property type="term" value="C:plasma membrane"/>
    <property type="evidence" value="ECO:0007669"/>
    <property type="project" value="UniProtKB-SubCell"/>
</dbReference>
<dbReference type="GO" id="GO:0050660">
    <property type="term" value="F:flavin adenine dinucleotide binding"/>
    <property type="evidence" value="ECO:0007669"/>
    <property type="project" value="InterPro"/>
</dbReference>
<dbReference type="GO" id="GO:0015386">
    <property type="term" value="F:potassium:proton antiporter activity"/>
    <property type="evidence" value="ECO:0007669"/>
    <property type="project" value="UniProtKB-UniRule"/>
</dbReference>
<dbReference type="GO" id="GO:0006884">
    <property type="term" value="P:cell volume homeostasis"/>
    <property type="evidence" value="ECO:0007669"/>
    <property type="project" value="InterPro"/>
</dbReference>
<dbReference type="FunFam" id="1.20.1530.20:FF:000002">
    <property type="entry name" value="K(+)/H(+) antiporter NhaP2"/>
    <property type="match status" value="1"/>
</dbReference>
<dbReference type="Gene3D" id="1.20.1530.20">
    <property type="match status" value="1"/>
</dbReference>
<dbReference type="Gene3D" id="3.30.465.10">
    <property type="match status" value="1"/>
</dbReference>
<dbReference type="Gene3D" id="3.30.70.1450">
    <property type="entry name" value="Regulator of K+ conductance, C-terminal domain"/>
    <property type="match status" value="1"/>
</dbReference>
<dbReference type="HAMAP" id="MF_01075">
    <property type="entry name" value="NhaP2"/>
    <property type="match status" value="1"/>
</dbReference>
<dbReference type="InterPro" id="IPR006153">
    <property type="entry name" value="Cation/H_exchanger_TM"/>
</dbReference>
<dbReference type="InterPro" id="IPR036318">
    <property type="entry name" value="FAD-bd_PCMH-like_sf"/>
</dbReference>
<dbReference type="InterPro" id="IPR016169">
    <property type="entry name" value="FAD-bd_PCMH_sub2"/>
</dbReference>
<dbReference type="InterPro" id="IPR038770">
    <property type="entry name" value="Na+/solute_symporter_sf"/>
</dbReference>
<dbReference type="InterPro" id="IPR023729">
    <property type="entry name" value="NhaP2"/>
</dbReference>
<dbReference type="InterPro" id="IPR006037">
    <property type="entry name" value="RCK_C"/>
</dbReference>
<dbReference type="InterPro" id="IPR036721">
    <property type="entry name" value="RCK_C_sf"/>
</dbReference>
<dbReference type="InterPro" id="IPR005170">
    <property type="entry name" value="Transptr-assoc_dom"/>
</dbReference>
<dbReference type="NCBIfam" id="NF003714">
    <property type="entry name" value="PRK05326.1-1"/>
    <property type="match status" value="1"/>
</dbReference>
<dbReference type="NCBIfam" id="NF003715">
    <property type="entry name" value="PRK05326.1-2"/>
    <property type="match status" value="1"/>
</dbReference>
<dbReference type="NCBIfam" id="NF003716">
    <property type="entry name" value="PRK05326.1-3"/>
    <property type="match status" value="1"/>
</dbReference>
<dbReference type="PANTHER" id="PTHR32507:SF7">
    <property type="entry name" value="K(+)_H(+) ANTIPORTER NHAP2"/>
    <property type="match status" value="1"/>
</dbReference>
<dbReference type="PANTHER" id="PTHR32507">
    <property type="entry name" value="NA(+)/H(+) ANTIPORTER 1"/>
    <property type="match status" value="1"/>
</dbReference>
<dbReference type="Pfam" id="PF03471">
    <property type="entry name" value="CorC_HlyC"/>
    <property type="match status" value="1"/>
</dbReference>
<dbReference type="Pfam" id="PF00999">
    <property type="entry name" value="Na_H_Exchanger"/>
    <property type="match status" value="1"/>
</dbReference>
<dbReference type="Pfam" id="PF02080">
    <property type="entry name" value="TrkA_C"/>
    <property type="match status" value="1"/>
</dbReference>
<dbReference type="SMART" id="SM01091">
    <property type="entry name" value="CorC_HlyC"/>
    <property type="match status" value="1"/>
</dbReference>
<dbReference type="SUPFAM" id="SSF56176">
    <property type="entry name" value="FAD-binding/transporter-associated domain-like"/>
    <property type="match status" value="1"/>
</dbReference>
<dbReference type="SUPFAM" id="SSF116726">
    <property type="entry name" value="TrkA C-terminal domain-like"/>
    <property type="match status" value="1"/>
</dbReference>
<dbReference type="PROSITE" id="PS51202">
    <property type="entry name" value="RCK_C"/>
    <property type="match status" value="1"/>
</dbReference>
<keyword id="KW-0050">Antiport</keyword>
<keyword id="KW-0997">Cell inner membrane</keyword>
<keyword id="KW-1003">Cell membrane</keyword>
<keyword id="KW-0406">Ion transport</keyword>
<keyword id="KW-0472">Membrane</keyword>
<keyword id="KW-0630">Potassium</keyword>
<keyword id="KW-0633">Potassium transport</keyword>
<keyword id="KW-0812">Transmembrane</keyword>
<keyword id="KW-1133">Transmembrane helix</keyword>
<keyword id="KW-0813">Transport</keyword>
<organism>
    <name type="scientific">Salmonella enteritidis PT4 (strain P125109)</name>
    <dbReference type="NCBI Taxonomy" id="550537"/>
    <lineage>
        <taxon>Bacteria</taxon>
        <taxon>Pseudomonadati</taxon>
        <taxon>Pseudomonadota</taxon>
        <taxon>Gammaproteobacteria</taxon>
        <taxon>Enterobacterales</taxon>
        <taxon>Enterobacteriaceae</taxon>
        <taxon>Salmonella</taxon>
    </lineage>
</organism>
<feature type="chain" id="PRO_1000136711" description="K(+)/H(+) antiporter NhaP2">
    <location>
        <begin position="1"/>
        <end position="577"/>
    </location>
</feature>
<feature type="transmembrane region" description="Helical" evidence="1">
    <location>
        <begin position="3"/>
        <end position="23"/>
    </location>
</feature>
<feature type="transmembrane region" description="Helical" evidence="1">
    <location>
        <begin position="30"/>
        <end position="50"/>
    </location>
</feature>
<feature type="transmembrane region" description="Helical" evidence="1">
    <location>
        <begin position="58"/>
        <end position="78"/>
    </location>
</feature>
<feature type="transmembrane region" description="Helical" evidence="1">
    <location>
        <begin position="87"/>
        <end position="107"/>
    </location>
</feature>
<feature type="transmembrane region" description="Helical" evidence="1">
    <location>
        <begin position="109"/>
        <end position="129"/>
    </location>
</feature>
<feature type="transmembrane region" description="Helical" evidence="1">
    <location>
        <begin position="185"/>
        <end position="205"/>
    </location>
</feature>
<feature type="transmembrane region" description="Helical" evidence="1">
    <location>
        <begin position="221"/>
        <end position="241"/>
    </location>
</feature>
<feature type="transmembrane region" description="Helical" evidence="1">
    <location>
        <begin position="271"/>
        <end position="291"/>
    </location>
</feature>
<feature type="transmembrane region" description="Helical" evidence="1">
    <location>
        <begin position="293"/>
        <end position="313"/>
    </location>
</feature>
<feature type="transmembrane region" description="Helical" evidence="1">
    <location>
        <begin position="334"/>
        <end position="354"/>
    </location>
</feature>
<feature type="transmembrane region" description="Helical" evidence="1">
    <location>
        <begin position="363"/>
        <end position="383"/>
    </location>
</feature>
<feature type="domain" description="RCK C-terminal" evidence="1">
    <location>
        <begin position="403"/>
        <end position="485"/>
    </location>
</feature>
<gene>
    <name evidence="1" type="primary">nhaP2</name>
    <name type="synonym">cvrA</name>
    <name type="ordered locus">SEN1236</name>
</gene>
<accession>B5R2W9</accession>
<sequence>MDAATIISLFILGSILVTSSILLSSFSSRLGIPILVIFLAIGMLAGVDGIGGIPFDNYPFAYMVSNLALAIILLDGGMRTQASSFRVALGPALSLATLGVLITSGLTGMMAAWLFHLDLIEGLLIGAIVGSTDAAAVFSLLGGKGLNERVGSTLEIESGSNDPMAVFLTITLIEMIQKHETGLDWMFAVHIIQQFGLGIVFGLGGGYLLQQMINRISLPSGLYPMLALSGGILIFALTTALEGSGILAVYLCGFLLGNRPIRNRYGILQNFDGLAWLAQIAMFLVLGLLVTPSDLWPIAVPALILSIWMIFFARPLSVFTGLLPFRGFNLRERIFISWVGLRGAVPIILAVFPMMAGLENARLFFNVAFFVVLVSLLLQGTSLSWAAKRAKVVVPPVGWPVSRVGLDIHPDNPWEQFIYQLSADKWCVGAALRDLHMPNETRIAALFRNNELFHPTGSTRLQEGDVLCVIGRERDLPALGKLFSQSPPVSLDQRFFGDFILEANAKFADVALIYGLEEGTEYRDKQQTLGEIIQQLLGAAPVVGDQVEFGGMIWTVAEKEDNVVRKIGVRVAEDEAE</sequence>
<comment type="function">
    <text evidence="1">K(+)/H(+) antiporter that extrudes potassium in exchange for external protons and maintains the internal concentration of potassium under toxic levels.</text>
</comment>
<comment type="catalytic activity">
    <reaction evidence="1">
        <text>K(+)(in) + H(+)(out) = K(+)(out) + H(+)(in)</text>
        <dbReference type="Rhea" id="RHEA:29467"/>
        <dbReference type="ChEBI" id="CHEBI:15378"/>
        <dbReference type="ChEBI" id="CHEBI:29103"/>
    </reaction>
    <physiologicalReaction direction="left-to-right" evidence="1">
        <dbReference type="Rhea" id="RHEA:29468"/>
    </physiologicalReaction>
</comment>
<comment type="subcellular location">
    <subcellularLocation>
        <location evidence="1">Cell inner membrane</location>
        <topology evidence="1">Multi-pass membrane protein</topology>
    </subcellularLocation>
</comment>
<comment type="similarity">
    <text evidence="1">Belongs to the monovalent cation:proton antiporter 1 (CPA1) transporter (TC 2.A.36) family. NhaP2 subfamily.</text>
</comment>
<name>NHAP2_SALEP</name>